<gene>
    <name evidence="1" type="primary">gpmA</name>
    <name type="ordered locus">BCc_186</name>
</gene>
<proteinExistence type="inferred from homology"/>
<dbReference type="EC" id="5.4.2.11" evidence="1"/>
<dbReference type="EMBL" id="CP000263">
    <property type="protein sequence ID" value="ABJ90658.1"/>
    <property type="molecule type" value="Genomic_DNA"/>
</dbReference>
<dbReference type="RefSeq" id="WP_011672577.1">
    <property type="nucleotide sequence ID" value="NC_008513.1"/>
</dbReference>
<dbReference type="SMR" id="Q057P1"/>
<dbReference type="STRING" id="372461.BCc_186"/>
<dbReference type="KEGG" id="bcc:BCc_186"/>
<dbReference type="eggNOG" id="COG0588">
    <property type="taxonomic scope" value="Bacteria"/>
</dbReference>
<dbReference type="HOGENOM" id="CLU_033323_1_1_6"/>
<dbReference type="OrthoDB" id="9781415at2"/>
<dbReference type="UniPathway" id="UPA00109">
    <property type="reaction ID" value="UER00186"/>
</dbReference>
<dbReference type="Proteomes" id="UP000000669">
    <property type="component" value="Chromosome"/>
</dbReference>
<dbReference type="GO" id="GO:0004619">
    <property type="term" value="F:phosphoglycerate mutase activity"/>
    <property type="evidence" value="ECO:0007669"/>
    <property type="project" value="UniProtKB-EC"/>
</dbReference>
<dbReference type="GO" id="GO:0006094">
    <property type="term" value="P:gluconeogenesis"/>
    <property type="evidence" value="ECO:0007669"/>
    <property type="project" value="UniProtKB-UniRule"/>
</dbReference>
<dbReference type="GO" id="GO:0006096">
    <property type="term" value="P:glycolytic process"/>
    <property type="evidence" value="ECO:0007669"/>
    <property type="project" value="UniProtKB-UniRule"/>
</dbReference>
<dbReference type="CDD" id="cd07067">
    <property type="entry name" value="HP_PGM_like"/>
    <property type="match status" value="1"/>
</dbReference>
<dbReference type="FunFam" id="3.40.50.1240:FF:000003">
    <property type="entry name" value="2,3-bisphosphoglycerate-dependent phosphoglycerate mutase"/>
    <property type="match status" value="1"/>
</dbReference>
<dbReference type="Gene3D" id="3.40.50.1240">
    <property type="entry name" value="Phosphoglycerate mutase-like"/>
    <property type="match status" value="1"/>
</dbReference>
<dbReference type="HAMAP" id="MF_01039">
    <property type="entry name" value="PGAM_GpmA"/>
    <property type="match status" value="1"/>
</dbReference>
<dbReference type="InterPro" id="IPR013078">
    <property type="entry name" value="His_Pase_superF_clade-1"/>
</dbReference>
<dbReference type="InterPro" id="IPR029033">
    <property type="entry name" value="His_PPase_superfam"/>
</dbReference>
<dbReference type="InterPro" id="IPR001345">
    <property type="entry name" value="PG/BPGM_mutase_AS"/>
</dbReference>
<dbReference type="InterPro" id="IPR005952">
    <property type="entry name" value="Phosphogly_mut1"/>
</dbReference>
<dbReference type="NCBIfam" id="TIGR01258">
    <property type="entry name" value="pgm_1"/>
    <property type="match status" value="1"/>
</dbReference>
<dbReference type="NCBIfam" id="NF010713">
    <property type="entry name" value="PRK14115.1"/>
    <property type="match status" value="1"/>
</dbReference>
<dbReference type="PANTHER" id="PTHR11931">
    <property type="entry name" value="PHOSPHOGLYCERATE MUTASE"/>
    <property type="match status" value="1"/>
</dbReference>
<dbReference type="Pfam" id="PF00300">
    <property type="entry name" value="His_Phos_1"/>
    <property type="match status" value="2"/>
</dbReference>
<dbReference type="PIRSF" id="PIRSF000709">
    <property type="entry name" value="6PFK_2-Ptase"/>
    <property type="match status" value="1"/>
</dbReference>
<dbReference type="SMART" id="SM00855">
    <property type="entry name" value="PGAM"/>
    <property type="match status" value="1"/>
</dbReference>
<dbReference type="SUPFAM" id="SSF53254">
    <property type="entry name" value="Phosphoglycerate mutase-like"/>
    <property type="match status" value="1"/>
</dbReference>
<dbReference type="PROSITE" id="PS00175">
    <property type="entry name" value="PG_MUTASE"/>
    <property type="match status" value="1"/>
</dbReference>
<comment type="function">
    <text evidence="1">Catalyzes the interconversion of 2-phosphoglycerate and 3-phosphoglycerate.</text>
</comment>
<comment type="catalytic activity">
    <reaction evidence="1">
        <text>(2R)-2-phosphoglycerate = (2R)-3-phosphoglycerate</text>
        <dbReference type="Rhea" id="RHEA:15901"/>
        <dbReference type="ChEBI" id="CHEBI:58272"/>
        <dbReference type="ChEBI" id="CHEBI:58289"/>
        <dbReference type="EC" id="5.4.2.11"/>
    </reaction>
</comment>
<comment type="pathway">
    <text evidence="1">Carbohydrate degradation; glycolysis; pyruvate from D-glyceraldehyde 3-phosphate: step 3/5.</text>
</comment>
<comment type="subunit">
    <text evidence="1">Homodimer.</text>
</comment>
<comment type="similarity">
    <text evidence="1">Belongs to the phosphoglycerate mutase family. BPG-dependent PGAM subfamily.</text>
</comment>
<protein>
    <recommendedName>
        <fullName evidence="1">2,3-bisphosphoglycerate-dependent phosphoglycerate mutase</fullName>
        <shortName evidence="1">BPG-dependent PGAM</shortName>
        <shortName evidence="1">PGAM</shortName>
        <shortName evidence="1">Phosphoglyceromutase</shortName>
        <shortName evidence="1">dPGM</shortName>
        <ecNumber evidence="1">5.4.2.11</ecNumber>
    </recommendedName>
</protein>
<organism>
    <name type="scientific">Buchnera aphidicola subsp. Cinara cedri (strain Cc)</name>
    <dbReference type="NCBI Taxonomy" id="372461"/>
    <lineage>
        <taxon>Bacteria</taxon>
        <taxon>Pseudomonadati</taxon>
        <taxon>Pseudomonadota</taxon>
        <taxon>Gammaproteobacteria</taxon>
        <taxon>Enterobacterales</taxon>
        <taxon>Erwiniaceae</taxon>
        <taxon>Buchnera</taxon>
    </lineage>
</organism>
<accession>Q057P1</accession>
<feature type="chain" id="PRO_1000064037" description="2,3-bisphosphoglycerate-dependent phosphoglycerate mutase">
    <location>
        <begin position="1"/>
        <end position="230"/>
    </location>
</feature>
<feature type="active site" description="Tele-phosphohistidine intermediate" evidence="1">
    <location>
        <position position="11"/>
    </location>
</feature>
<feature type="active site" description="Proton donor/acceptor" evidence="1">
    <location>
        <position position="89"/>
    </location>
</feature>
<feature type="binding site" evidence="1">
    <location>
        <begin position="10"/>
        <end position="17"/>
    </location>
    <ligand>
        <name>substrate</name>
    </ligand>
</feature>
<feature type="binding site" evidence="1">
    <location>
        <begin position="23"/>
        <end position="24"/>
    </location>
    <ligand>
        <name>substrate</name>
    </ligand>
</feature>
<feature type="binding site" evidence="1">
    <location>
        <position position="62"/>
    </location>
    <ligand>
        <name>substrate</name>
    </ligand>
</feature>
<feature type="binding site" evidence="1">
    <location>
        <begin position="89"/>
        <end position="92"/>
    </location>
    <ligand>
        <name>substrate</name>
    </ligand>
</feature>
<feature type="binding site" evidence="1">
    <location>
        <position position="100"/>
    </location>
    <ligand>
        <name>substrate</name>
    </ligand>
</feature>
<feature type="binding site" evidence="1">
    <location>
        <begin position="116"/>
        <end position="117"/>
    </location>
    <ligand>
        <name>substrate</name>
    </ligand>
</feature>
<feature type="binding site" evidence="1">
    <location>
        <begin position="185"/>
        <end position="186"/>
    </location>
    <ligand>
        <name>substrate</name>
    </ligand>
</feature>
<feature type="site" description="Transition state stabilizer" evidence="1">
    <location>
        <position position="184"/>
    </location>
</feature>
<evidence type="ECO:0000255" key="1">
    <source>
        <dbReference type="HAMAP-Rule" id="MF_01039"/>
    </source>
</evidence>
<reference key="1">
    <citation type="journal article" date="2006" name="Science">
        <title>A small microbial genome: the end of a long symbiotic relationship?</title>
        <authorList>
            <person name="Perez-Brocal V."/>
            <person name="Gil R."/>
            <person name="Ramos S."/>
            <person name="Lamelas A."/>
            <person name="Postigo M."/>
            <person name="Michelena J.M."/>
            <person name="Silva F.J."/>
            <person name="Moya A."/>
            <person name="Latorre A."/>
        </authorList>
    </citation>
    <scope>NUCLEOTIDE SEQUENCE [LARGE SCALE GENOMIC DNA]</scope>
    <source>
        <strain>Cc</strain>
    </source>
</reference>
<name>GPMA_BUCCC</name>
<keyword id="KW-0312">Gluconeogenesis</keyword>
<keyword id="KW-0324">Glycolysis</keyword>
<keyword id="KW-0413">Isomerase</keyword>
<keyword id="KW-1185">Reference proteome</keyword>
<sequence>MKKKKIILMRHGESKWNKLNKFTGWQDIGLTKNGKKEAKLAAKLIKKNNFIFDIAYTSILKRAIYTLWIILKKTNQIWIPVYKSWKLNERNYGALEGLNKEKIKKKYGDEQVQLWRRSFTVCPPNLNISNKYHPIYDIKYKKLKKHELPTSESLEMTFNRVIPFWEFKILPQLEKNKNILIVAHGNSLRALIKYLGNISDSDIIDLDISTGKPLVYEFSNTNKPLKYYYL</sequence>